<dbReference type="EMBL" id="CP000247">
    <property type="protein sequence ID" value="ABG71301.1"/>
    <property type="molecule type" value="Genomic_DNA"/>
</dbReference>
<dbReference type="RefSeq" id="WP_001257847.1">
    <property type="nucleotide sequence ID" value="NC_008253.1"/>
</dbReference>
<dbReference type="SMR" id="Q0TCM8"/>
<dbReference type="KEGG" id="ecp:ECP_3321"/>
<dbReference type="HOGENOM" id="CLU_097103_2_0_6"/>
<dbReference type="UniPathway" id="UPA00068"/>
<dbReference type="Proteomes" id="UP000009182">
    <property type="component" value="Chromosome"/>
</dbReference>
<dbReference type="GO" id="GO:0005737">
    <property type="term" value="C:cytoplasm"/>
    <property type="evidence" value="ECO:0007669"/>
    <property type="project" value="UniProtKB-SubCell"/>
</dbReference>
<dbReference type="GO" id="GO:0034618">
    <property type="term" value="F:arginine binding"/>
    <property type="evidence" value="ECO:0007669"/>
    <property type="project" value="InterPro"/>
</dbReference>
<dbReference type="GO" id="GO:0003677">
    <property type="term" value="F:DNA binding"/>
    <property type="evidence" value="ECO:0007669"/>
    <property type="project" value="UniProtKB-KW"/>
</dbReference>
<dbReference type="GO" id="GO:0003700">
    <property type="term" value="F:DNA-binding transcription factor activity"/>
    <property type="evidence" value="ECO:0007669"/>
    <property type="project" value="UniProtKB-UniRule"/>
</dbReference>
<dbReference type="GO" id="GO:0006526">
    <property type="term" value="P:L-arginine biosynthetic process"/>
    <property type="evidence" value="ECO:0007669"/>
    <property type="project" value="UniProtKB-UniPathway"/>
</dbReference>
<dbReference type="GO" id="GO:0051259">
    <property type="term" value="P:protein complex oligomerization"/>
    <property type="evidence" value="ECO:0007669"/>
    <property type="project" value="InterPro"/>
</dbReference>
<dbReference type="GO" id="GO:1900079">
    <property type="term" value="P:regulation of arginine biosynthetic process"/>
    <property type="evidence" value="ECO:0007669"/>
    <property type="project" value="UniProtKB-UniRule"/>
</dbReference>
<dbReference type="FunFam" id="1.10.10.10:FF:000074">
    <property type="entry name" value="Arginine repressor"/>
    <property type="match status" value="1"/>
</dbReference>
<dbReference type="FunFam" id="3.30.1360.40:FF:000004">
    <property type="entry name" value="Arginine repressor"/>
    <property type="match status" value="1"/>
</dbReference>
<dbReference type="Gene3D" id="3.30.1360.40">
    <property type="match status" value="1"/>
</dbReference>
<dbReference type="Gene3D" id="1.10.10.10">
    <property type="entry name" value="Winged helix-like DNA-binding domain superfamily/Winged helix DNA-binding domain"/>
    <property type="match status" value="1"/>
</dbReference>
<dbReference type="HAMAP" id="MF_00173">
    <property type="entry name" value="Arg_repressor"/>
    <property type="match status" value="1"/>
</dbReference>
<dbReference type="InterPro" id="IPR001669">
    <property type="entry name" value="Arg_repress"/>
</dbReference>
<dbReference type="InterPro" id="IPR020899">
    <property type="entry name" value="Arg_repress_C"/>
</dbReference>
<dbReference type="InterPro" id="IPR036251">
    <property type="entry name" value="Arg_repress_C_sf"/>
</dbReference>
<dbReference type="InterPro" id="IPR020900">
    <property type="entry name" value="Arg_repress_DNA-bd"/>
</dbReference>
<dbReference type="InterPro" id="IPR036388">
    <property type="entry name" value="WH-like_DNA-bd_sf"/>
</dbReference>
<dbReference type="InterPro" id="IPR036390">
    <property type="entry name" value="WH_DNA-bd_sf"/>
</dbReference>
<dbReference type="NCBIfam" id="TIGR01529">
    <property type="entry name" value="argR_whole"/>
    <property type="match status" value="1"/>
</dbReference>
<dbReference type="NCBIfam" id="NF003457">
    <property type="entry name" value="PRK05066.1"/>
    <property type="match status" value="1"/>
</dbReference>
<dbReference type="PANTHER" id="PTHR34471">
    <property type="entry name" value="ARGININE REPRESSOR"/>
    <property type="match status" value="1"/>
</dbReference>
<dbReference type="PANTHER" id="PTHR34471:SF1">
    <property type="entry name" value="ARGININE REPRESSOR"/>
    <property type="match status" value="1"/>
</dbReference>
<dbReference type="Pfam" id="PF01316">
    <property type="entry name" value="Arg_repressor"/>
    <property type="match status" value="1"/>
</dbReference>
<dbReference type="Pfam" id="PF02863">
    <property type="entry name" value="Arg_repressor_C"/>
    <property type="match status" value="1"/>
</dbReference>
<dbReference type="PRINTS" id="PR01467">
    <property type="entry name" value="ARGREPRESSOR"/>
</dbReference>
<dbReference type="SUPFAM" id="SSF55252">
    <property type="entry name" value="C-terminal domain of arginine repressor"/>
    <property type="match status" value="1"/>
</dbReference>
<dbReference type="SUPFAM" id="SSF46785">
    <property type="entry name" value="Winged helix' DNA-binding domain"/>
    <property type="match status" value="1"/>
</dbReference>
<name>ARGR_ECOL5</name>
<organism>
    <name type="scientific">Escherichia coli O6:K15:H31 (strain 536 / UPEC)</name>
    <dbReference type="NCBI Taxonomy" id="362663"/>
    <lineage>
        <taxon>Bacteria</taxon>
        <taxon>Pseudomonadati</taxon>
        <taxon>Pseudomonadota</taxon>
        <taxon>Gammaproteobacteria</taxon>
        <taxon>Enterobacterales</taxon>
        <taxon>Enterobacteriaceae</taxon>
        <taxon>Escherichia</taxon>
    </lineage>
</organism>
<gene>
    <name evidence="1" type="primary">argR</name>
    <name type="ordered locus">ECP_3321</name>
</gene>
<keyword id="KW-0028">Amino-acid biosynthesis</keyword>
<keyword id="KW-0055">Arginine biosynthesis</keyword>
<keyword id="KW-0963">Cytoplasm</keyword>
<keyword id="KW-0238">DNA-binding</keyword>
<keyword id="KW-0678">Repressor</keyword>
<keyword id="KW-0804">Transcription</keyword>
<keyword id="KW-0805">Transcription regulation</keyword>
<sequence>MRSSAKQEELVKAFKALLKEEKFSSQGEIVAALQEQGFDNINQSKVSRMLTKFGAVRTRNAKMEMVYCLPAELGVPTTSSPLKNLVLDIDYNDAVVVIHTSPGAAQLIARLLDSLGKAEGILGTIAGDDTIFTTPANGFTVKELYEAILELFDQEL</sequence>
<accession>Q0TCM8</accession>
<protein>
    <recommendedName>
        <fullName evidence="1">Arginine repressor</fullName>
    </recommendedName>
</protein>
<reference key="1">
    <citation type="journal article" date="2006" name="Mol. Microbiol.">
        <title>Role of pathogenicity island-associated integrases in the genome plasticity of uropathogenic Escherichia coli strain 536.</title>
        <authorList>
            <person name="Hochhut B."/>
            <person name="Wilde C."/>
            <person name="Balling G."/>
            <person name="Middendorf B."/>
            <person name="Dobrindt U."/>
            <person name="Brzuszkiewicz E."/>
            <person name="Gottschalk G."/>
            <person name="Carniel E."/>
            <person name="Hacker J."/>
        </authorList>
    </citation>
    <scope>NUCLEOTIDE SEQUENCE [LARGE SCALE GENOMIC DNA]</scope>
    <source>
        <strain>536 / UPEC</strain>
    </source>
</reference>
<comment type="function">
    <text evidence="1">Regulates arginine biosynthesis genes.</text>
</comment>
<comment type="pathway">
    <text>Amino-acid biosynthesis; L-arginine biosynthesis [regulation].</text>
</comment>
<comment type="subcellular location">
    <subcellularLocation>
        <location evidence="1">Cytoplasm</location>
    </subcellularLocation>
</comment>
<comment type="similarity">
    <text evidence="1">Belongs to the ArgR family.</text>
</comment>
<evidence type="ECO:0000255" key="1">
    <source>
        <dbReference type="HAMAP-Rule" id="MF_00173"/>
    </source>
</evidence>
<feature type="chain" id="PRO_1000023564" description="Arginine repressor">
    <location>
        <begin position="1"/>
        <end position="156"/>
    </location>
</feature>
<proteinExistence type="inferred from homology"/>